<dbReference type="EMBL" id="AJ938182">
    <property type="protein sequence ID" value="CAI81467.1"/>
    <property type="molecule type" value="Genomic_DNA"/>
</dbReference>
<dbReference type="RefSeq" id="WP_000290301.1">
    <property type="nucleotide sequence ID" value="NC_007622.1"/>
</dbReference>
<dbReference type="SMR" id="Q2YTZ2"/>
<dbReference type="KEGG" id="sab:SAB1778c"/>
<dbReference type="HOGENOM" id="CLU_140243_3_0_9"/>
<dbReference type="Gene3D" id="1.20.1500.10">
    <property type="entry name" value="YheA/YmcA-like"/>
    <property type="match status" value="1"/>
</dbReference>
<dbReference type="HAMAP" id="MF_01526">
    <property type="entry name" value="UPF0342"/>
    <property type="match status" value="1"/>
</dbReference>
<dbReference type="InterPro" id="IPR010368">
    <property type="entry name" value="Com_YlbF"/>
</dbReference>
<dbReference type="InterPro" id="IPR023378">
    <property type="entry name" value="YheA/YmcA-like_dom_sf"/>
</dbReference>
<dbReference type="NCBIfam" id="NF010212">
    <property type="entry name" value="PRK13676.1-5"/>
    <property type="match status" value="1"/>
</dbReference>
<dbReference type="Pfam" id="PF06133">
    <property type="entry name" value="Com_YlbF"/>
    <property type="match status" value="1"/>
</dbReference>
<dbReference type="SUPFAM" id="SSF158622">
    <property type="entry name" value="YheA/YmcA-like"/>
    <property type="match status" value="1"/>
</dbReference>
<gene>
    <name type="ordered locus">SAB1778c</name>
</gene>
<comment type="similarity">
    <text evidence="1">Belongs to the UPF0342 family.</text>
</comment>
<name>Y1778_STAAB</name>
<proteinExistence type="inferred from homology"/>
<accession>Q2YTZ2</accession>
<evidence type="ECO:0000255" key="1">
    <source>
        <dbReference type="HAMAP-Rule" id="MF_01526"/>
    </source>
</evidence>
<protein>
    <recommendedName>
        <fullName evidence="1">UPF0342 protein SAB1778c</fullName>
    </recommendedName>
</protein>
<sequence length="114" mass="13310">MAVNLYDYANQLEQALRESEEYKAIKEAFANVKANEESKKLFDEFRETQINFQQKQMQGEEIAEEDLQKAQEQAQAIEKDENISALMNAEQKMSQVFQEINQIIVKPLDEIYAD</sequence>
<feature type="chain" id="PRO_0000292740" description="UPF0342 protein SAB1778c">
    <location>
        <begin position="1"/>
        <end position="114"/>
    </location>
</feature>
<organism>
    <name type="scientific">Staphylococcus aureus (strain bovine RF122 / ET3-1)</name>
    <dbReference type="NCBI Taxonomy" id="273036"/>
    <lineage>
        <taxon>Bacteria</taxon>
        <taxon>Bacillati</taxon>
        <taxon>Bacillota</taxon>
        <taxon>Bacilli</taxon>
        <taxon>Bacillales</taxon>
        <taxon>Staphylococcaceae</taxon>
        <taxon>Staphylococcus</taxon>
    </lineage>
</organism>
<reference key="1">
    <citation type="journal article" date="2007" name="PLoS ONE">
        <title>Molecular correlates of host specialization in Staphylococcus aureus.</title>
        <authorList>
            <person name="Herron-Olson L."/>
            <person name="Fitzgerald J.R."/>
            <person name="Musser J.M."/>
            <person name="Kapur V."/>
        </authorList>
    </citation>
    <scope>NUCLEOTIDE SEQUENCE [LARGE SCALE GENOMIC DNA]</scope>
    <source>
        <strain>bovine RF122 / ET3-1</strain>
    </source>
</reference>